<gene>
    <name type="primary">pam17</name>
    <name type="ORF">NCU00737</name>
</gene>
<proteinExistence type="inferred from homology"/>
<comment type="function">
    <text evidence="1">Component of the PAM complex, a complex required for the translocation of transit peptide-containing proteins from the inner membrane into the mitochondrial matrix in an ATP-dependent manner.</text>
</comment>
<comment type="subunit">
    <text evidence="1">Component of the PAM complex, at least composed of hsp70-5/ssc1, grpe/mge1, tim44, un-4/pam16, pam17 and tim14/pam18.</text>
</comment>
<comment type="subcellular location">
    <subcellularLocation>
        <location evidence="1">Mitochondrion inner membrane</location>
        <topology evidence="1">Multi-pass membrane protein</topology>
    </subcellularLocation>
</comment>
<comment type="similarity">
    <text evidence="4">Belongs to the PAM17 family.</text>
</comment>
<protein>
    <recommendedName>
        <fullName>Presequence translocated-associated motor subunit pam17, mitochondrial</fullName>
    </recommendedName>
</protein>
<name>PAM17_NEUCR</name>
<feature type="transit peptide" description="Mitochondrion" evidence="2">
    <location>
        <begin position="1"/>
        <end position="86"/>
    </location>
</feature>
<feature type="chain" id="PRO_0000043158" description="Presequence translocated-associated motor subunit pam17, mitochondrial">
    <location>
        <begin position="87"/>
        <end position="267"/>
    </location>
</feature>
<feature type="transmembrane region" description="Helical" evidence="2">
    <location>
        <begin position="134"/>
        <end position="154"/>
    </location>
</feature>
<feature type="transmembrane region" description="Helical" evidence="2">
    <location>
        <begin position="171"/>
        <end position="191"/>
    </location>
</feature>
<feature type="region of interest" description="Disordered" evidence="3">
    <location>
        <begin position="71"/>
        <end position="101"/>
    </location>
</feature>
<feature type="compositionally biased region" description="Low complexity" evidence="3">
    <location>
        <begin position="71"/>
        <end position="88"/>
    </location>
</feature>
<reference key="1">
    <citation type="journal article" date="2003" name="Nature">
        <title>The genome sequence of the filamentous fungus Neurospora crassa.</title>
        <authorList>
            <person name="Galagan J.E."/>
            <person name="Calvo S.E."/>
            <person name="Borkovich K.A."/>
            <person name="Selker E.U."/>
            <person name="Read N.D."/>
            <person name="Jaffe D.B."/>
            <person name="FitzHugh W."/>
            <person name="Ma L.-J."/>
            <person name="Smirnov S."/>
            <person name="Purcell S."/>
            <person name="Rehman B."/>
            <person name="Elkins T."/>
            <person name="Engels R."/>
            <person name="Wang S."/>
            <person name="Nielsen C.B."/>
            <person name="Butler J."/>
            <person name="Endrizzi M."/>
            <person name="Qui D."/>
            <person name="Ianakiev P."/>
            <person name="Bell-Pedersen D."/>
            <person name="Nelson M.A."/>
            <person name="Werner-Washburne M."/>
            <person name="Selitrennikoff C.P."/>
            <person name="Kinsey J.A."/>
            <person name="Braun E.L."/>
            <person name="Zelter A."/>
            <person name="Schulte U."/>
            <person name="Kothe G.O."/>
            <person name="Jedd G."/>
            <person name="Mewes H.-W."/>
            <person name="Staben C."/>
            <person name="Marcotte E."/>
            <person name="Greenberg D."/>
            <person name="Roy A."/>
            <person name="Foley K."/>
            <person name="Naylor J."/>
            <person name="Stange-Thomann N."/>
            <person name="Barrett R."/>
            <person name="Gnerre S."/>
            <person name="Kamal M."/>
            <person name="Kamvysselis M."/>
            <person name="Mauceli E.W."/>
            <person name="Bielke C."/>
            <person name="Rudd S."/>
            <person name="Frishman D."/>
            <person name="Krystofova S."/>
            <person name="Rasmussen C."/>
            <person name="Metzenberg R.L."/>
            <person name="Perkins D.D."/>
            <person name="Kroken S."/>
            <person name="Cogoni C."/>
            <person name="Macino G."/>
            <person name="Catcheside D.E.A."/>
            <person name="Li W."/>
            <person name="Pratt R.J."/>
            <person name="Osmani S.A."/>
            <person name="DeSouza C.P.C."/>
            <person name="Glass N.L."/>
            <person name="Orbach M.J."/>
            <person name="Berglund J.A."/>
            <person name="Voelker R."/>
            <person name="Yarden O."/>
            <person name="Plamann M."/>
            <person name="Seiler S."/>
            <person name="Dunlap J.C."/>
            <person name="Radford A."/>
            <person name="Aramayo R."/>
            <person name="Natvig D.O."/>
            <person name="Alex L.A."/>
            <person name="Mannhaupt G."/>
            <person name="Ebbole D.J."/>
            <person name="Freitag M."/>
            <person name="Paulsen I."/>
            <person name="Sachs M.S."/>
            <person name="Lander E.S."/>
            <person name="Nusbaum C."/>
            <person name="Birren B.W."/>
        </authorList>
    </citation>
    <scope>NUCLEOTIDE SEQUENCE [LARGE SCALE GENOMIC DNA]</scope>
    <source>
        <strain>ATCC 24698 / 74-OR23-1A / CBS 708.71 / DSM 1257 / FGSC 987</strain>
    </source>
</reference>
<organism>
    <name type="scientific">Neurospora crassa (strain ATCC 24698 / 74-OR23-1A / CBS 708.71 / DSM 1257 / FGSC 987)</name>
    <dbReference type="NCBI Taxonomy" id="367110"/>
    <lineage>
        <taxon>Eukaryota</taxon>
        <taxon>Fungi</taxon>
        <taxon>Dikarya</taxon>
        <taxon>Ascomycota</taxon>
        <taxon>Pezizomycotina</taxon>
        <taxon>Sordariomycetes</taxon>
        <taxon>Sordariomycetidae</taxon>
        <taxon>Sordariales</taxon>
        <taxon>Sordariaceae</taxon>
        <taxon>Neurospora</taxon>
    </lineage>
</organism>
<accession>Q7SEE1</accession>
<dbReference type="EMBL" id="CM002236">
    <property type="protein sequence ID" value="EAA35154.1"/>
    <property type="molecule type" value="Genomic_DNA"/>
</dbReference>
<dbReference type="RefSeq" id="XP_964390.1">
    <property type="nucleotide sequence ID" value="XM_959297.3"/>
</dbReference>
<dbReference type="FunCoup" id="Q7SEE1">
    <property type="interactions" value="45"/>
</dbReference>
<dbReference type="STRING" id="367110.Q7SEE1"/>
<dbReference type="PaxDb" id="5141-EFNCRP00000000629"/>
<dbReference type="EnsemblFungi" id="EAA35154">
    <property type="protein sequence ID" value="EAA35154"/>
    <property type="gene ID" value="NCU00737"/>
</dbReference>
<dbReference type="GeneID" id="3880540"/>
<dbReference type="KEGG" id="ncr:NCU00737"/>
<dbReference type="VEuPathDB" id="FungiDB:NCU00737"/>
<dbReference type="HOGENOM" id="CLU_068297_0_1_1"/>
<dbReference type="InParanoid" id="Q7SEE1"/>
<dbReference type="OrthoDB" id="5970083at2759"/>
<dbReference type="Proteomes" id="UP000001805">
    <property type="component" value="Chromosome 1, Linkage Group I"/>
</dbReference>
<dbReference type="GO" id="GO:0001405">
    <property type="term" value="C:PAM complex, Tim23 associated import motor"/>
    <property type="evidence" value="ECO:0000318"/>
    <property type="project" value="GO_Central"/>
</dbReference>
<dbReference type="GO" id="GO:0030150">
    <property type="term" value="P:protein import into mitochondrial matrix"/>
    <property type="evidence" value="ECO:0000318"/>
    <property type="project" value="GO_Central"/>
</dbReference>
<dbReference type="InterPro" id="IPR013875">
    <property type="entry name" value="Pam17"/>
</dbReference>
<dbReference type="PANTHER" id="PTHR28021">
    <property type="entry name" value="PRESEQUENCE TRANSLOCATED-ASSOCIATED MOTOR SUBUNIT PAM17, MITOCHONDRIAL"/>
    <property type="match status" value="1"/>
</dbReference>
<dbReference type="PANTHER" id="PTHR28021:SF1">
    <property type="entry name" value="PRESEQUENCE TRANSLOCATED-ASSOCIATED MOTOR SUBUNIT PAM17, MITOCHONDRIAL"/>
    <property type="match status" value="1"/>
</dbReference>
<dbReference type="Pfam" id="PF08566">
    <property type="entry name" value="Pam17"/>
    <property type="match status" value="1"/>
</dbReference>
<keyword id="KW-0472">Membrane</keyword>
<keyword id="KW-0496">Mitochondrion</keyword>
<keyword id="KW-0999">Mitochondrion inner membrane</keyword>
<keyword id="KW-0653">Protein transport</keyword>
<keyword id="KW-1185">Reference proteome</keyword>
<keyword id="KW-0809">Transit peptide</keyword>
<keyword id="KW-0811">Translocation</keyword>
<keyword id="KW-0812">Transmembrane</keyword>
<keyword id="KW-1133">Transmembrane helix</keyword>
<keyword id="KW-0813">Transport</keyword>
<sequence length="267" mass="28607">MLSSTATTMLRAGVSRSSGALQPMLLRSAACPCSPFSMNTKLSQPTSVRPLSTSPSALVLRFRAQQQAQLAQQQLRRASSSSSSSSSSTRPRSDAELDANAAEAAAAAQSAAHAGEPVLDWNTFFKLRKTRRRVQLAFSVIMTLITSGAGGAVLSTGVADAMVAQVPLEPMFAVGLMTASFGALGWLMGPAMGGMVFNALKSKYRGQMEIKEGQFFARIKKHRVDPSASSMGNPVPDFYGEKISSVAGYRQWLKDQRAFNKKRTTFV</sequence>
<evidence type="ECO:0000250" key="1"/>
<evidence type="ECO:0000255" key="2"/>
<evidence type="ECO:0000256" key="3">
    <source>
        <dbReference type="SAM" id="MobiDB-lite"/>
    </source>
</evidence>
<evidence type="ECO:0000305" key="4"/>